<name>PDXB_SHISS</name>
<feature type="chain" id="PRO_0000297476" description="Erythronate-4-phosphate dehydrogenase">
    <location>
        <begin position="1"/>
        <end position="378"/>
    </location>
</feature>
<feature type="active site" evidence="1">
    <location>
        <position position="208"/>
    </location>
</feature>
<feature type="active site" evidence="1">
    <location>
        <position position="237"/>
    </location>
</feature>
<feature type="active site" description="Proton donor" evidence="1">
    <location>
        <position position="254"/>
    </location>
</feature>
<feature type="binding site" evidence="1">
    <location>
        <position position="45"/>
    </location>
    <ligand>
        <name>substrate</name>
    </ligand>
</feature>
<feature type="binding site" evidence="1">
    <location>
        <position position="66"/>
    </location>
    <ligand>
        <name>substrate</name>
    </ligand>
</feature>
<feature type="binding site" evidence="1">
    <location>
        <position position="146"/>
    </location>
    <ligand>
        <name>NAD(+)</name>
        <dbReference type="ChEBI" id="CHEBI:57540"/>
    </ligand>
</feature>
<feature type="binding site" evidence="1">
    <location>
        <position position="175"/>
    </location>
    <ligand>
        <name>NAD(+)</name>
        <dbReference type="ChEBI" id="CHEBI:57540"/>
    </ligand>
</feature>
<feature type="binding site" evidence="1">
    <location>
        <position position="232"/>
    </location>
    <ligand>
        <name>NAD(+)</name>
        <dbReference type="ChEBI" id="CHEBI:57540"/>
    </ligand>
</feature>
<feature type="binding site" evidence="1">
    <location>
        <position position="257"/>
    </location>
    <ligand>
        <name>NAD(+)</name>
        <dbReference type="ChEBI" id="CHEBI:57540"/>
    </ligand>
</feature>
<feature type="binding site" evidence="1">
    <location>
        <position position="258"/>
    </location>
    <ligand>
        <name>substrate</name>
    </ligand>
</feature>
<evidence type="ECO:0000255" key="1">
    <source>
        <dbReference type="HAMAP-Rule" id="MF_01825"/>
    </source>
</evidence>
<reference key="1">
    <citation type="journal article" date="2005" name="Nucleic Acids Res.">
        <title>Genome dynamics and diversity of Shigella species, the etiologic agents of bacillary dysentery.</title>
        <authorList>
            <person name="Yang F."/>
            <person name="Yang J."/>
            <person name="Zhang X."/>
            <person name="Chen L."/>
            <person name="Jiang Y."/>
            <person name="Yan Y."/>
            <person name="Tang X."/>
            <person name="Wang J."/>
            <person name="Xiong Z."/>
            <person name="Dong J."/>
            <person name="Xue Y."/>
            <person name="Zhu Y."/>
            <person name="Xu X."/>
            <person name="Sun L."/>
            <person name="Chen S."/>
            <person name="Nie H."/>
            <person name="Peng J."/>
            <person name="Xu J."/>
            <person name="Wang Y."/>
            <person name="Yuan Z."/>
            <person name="Wen Y."/>
            <person name="Yao Z."/>
            <person name="Shen Y."/>
            <person name="Qiang B."/>
            <person name="Hou Y."/>
            <person name="Yu J."/>
            <person name="Jin Q."/>
        </authorList>
    </citation>
    <scope>NUCLEOTIDE SEQUENCE [LARGE SCALE GENOMIC DNA]</scope>
    <source>
        <strain>Ss046</strain>
    </source>
</reference>
<comment type="function">
    <text evidence="1">Catalyzes the oxidation of erythronate-4-phosphate to 3-hydroxy-2-oxo-4-phosphonooxybutanoate.</text>
</comment>
<comment type="catalytic activity">
    <reaction evidence="1">
        <text>4-phospho-D-erythronate + NAD(+) = (R)-3-hydroxy-2-oxo-4-phosphooxybutanoate + NADH + H(+)</text>
        <dbReference type="Rhea" id="RHEA:18829"/>
        <dbReference type="ChEBI" id="CHEBI:15378"/>
        <dbReference type="ChEBI" id="CHEBI:57540"/>
        <dbReference type="ChEBI" id="CHEBI:57945"/>
        <dbReference type="ChEBI" id="CHEBI:58538"/>
        <dbReference type="ChEBI" id="CHEBI:58766"/>
        <dbReference type="EC" id="1.1.1.290"/>
    </reaction>
</comment>
<comment type="pathway">
    <text evidence="1">Cofactor biosynthesis; pyridoxine 5'-phosphate biosynthesis; pyridoxine 5'-phosphate from D-erythrose 4-phosphate: step 2/5.</text>
</comment>
<comment type="subunit">
    <text evidence="1">Homodimer.</text>
</comment>
<comment type="subcellular location">
    <subcellularLocation>
        <location evidence="1">Cytoplasm</location>
    </subcellularLocation>
</comment>
<comment type="similarity">
    <text evidence="1">Belongs to the D-isomer specific 2-hydroxyacid dehydrogenase family. PdxB subfamily.</text>
</comment>
<dbReference type="EC" id="1.1.1.290" evidence="1"/>
<dbReference type="EMBL" id="CP000038">
    <property type="protein sequence ID" value="AAZ89021.1"/>
    <property type="molecule type" value="Genomic_DNA"/>
</dbReference>
<dbReference type="RefSeq" id="WP_000699121.1">
    <property type="nucleotide sequence ID" value="NC_007384.1"/>
</dbReference>
<dbReference type="SMR" id="Q3YZP1"/>
<dbReference type="GeneID" id="93774854"/>
<dbReference type="KEGG" id="ssn:SSON_2378"/>
<dbReference type="HOGENOM" id="CLU_019796_4_0_6"/>
<dbReference type="UniPathway" id="UPA00244">
    <property type="reaction ID" value="UER00310"/>
</dbReference>
<dbReference type="Proteomes" id="UP000002529">
    <property type="component" value="Chromosome"/>
</dbReference>
<dbReference type="GO" id="GO:0005829">
    <property type="term" value="C:cytosol"/>
    <property type="evidence" value="ECO:0007669"/>
    <property type="project" value="TreeGrafter"/>
</dbReference>
<dbReference type="GO" id="GO:0033711">
    <property type="term" value="F:4-phosphoerythronate dehydrogenase activity"/>
    <property type="evidence" value="ECO:0007669"/>
    <property type="project" value="UniProtKB-EC"/>
</dbReference>
<dbReference type="GO" id="GO:0051287">
    <property type="term" value="F:NAD binding"/>
    <property type="evidence" value="ECO:0007669"/>
    <property type="project" value="InterPro"/>
</dbReference>
<dbReference type="GO" id="GO:0046983">
    <property type="term" value="F:protein dimerization activity"/>
    <property type="evidence" value="ECO:0007669"/>
    <property type="project" value="InterPro"/>
</dbReference>
<dbReference type="GO" id="GO:0036001">
    <property type="term" value="P:'de novo' pyridoxal 5'-phosphate biosynthetic process"/>
    <property type="evidence" value="ECO:0007669"/>
    <property type="project" value="TreeGrafter"/>
</dbReference>
<dbReference type="GO" id="GO:0008615">
    <property type="term" value="P:pyridoxine biosynthetic process"/>
    <property type="evidence" value="ECO:0007669"/>
    <property type="project" value="UniProtKB-UniRule"/>
</dbReference>
<dbReference type="CDD" id="cd12158">
    <property type="entry name" value="ErythrP_dh"/>
    <property type="match status" value="1"/>
</dbReference>
<dbReference type="FunFam" id="3.30.1370.170:FF:000001">
    <property type="entry name" value="Erythronate-4-phosphate dehydrogenase"/>
    <property type="match status" value="1"/>
</dbReference>
<dbReference type="FunFam" id="3.40.50.720:FF:000093">
    <property type="entry name" value="Erythronate-4-phosphate dehydrogenase"/>
    <property type="match status" value="1"/>
</dbReference>
<dbReference type="Gene3D" id="3.30.1370.170">
    <property type="match status" value="1"/>
</dbReference>
<dbReference type="Gene3D" id="3.40.50.720">
    <property type="entry name" value="NAD(P)-binding Rossmann-like Domain"/>
    <property type="match status" value="2"/>
</dbReference>
<dbReference type="HAMAP" id="MF_01825">
    <property type="entry name" value="PdxB"/>
    <property type="match status" value="1"/>
</dbReference>
<dbReference type="InterPro" id="IPR006139">
    <property type="entry name" value="D-isomer_2_OHA_DH_cat_dom"/>
</dbReference>
<dbReference type="InterPro" id="IPR029753">
    <property type="entry name" value="D-isomer_DH_CS"/>
</dbReference>
<dbReference type="InterPro" id="IPR029752">
    <property type="entry name" value="D-isomer_DH_CS1"/>
</dbReference>
<dbReference type="InterPro" id="IPR006140">
    <property type="entry name" value="D-isomer_DH_NAD-bd"/>
</dbReference>
<dbReference type="InterPro" id="IPR020921">
    <property type="entry name" value="Erythronate-4-P_DHase"/>
</dbReference>
<dbReference type="InterPro" id="IPR024531">
    <property type="entry name" value="Erythronate-4-P_DHase_dimer"/>
</dbReference>
<dbReference type="InterPro" id="IPR036291">
    <property type="entry name" value="NAD(P)-bd_dom_sf"/>
</dbReference>
<dbReference type="InterPro" id="IPR038251">
    <property type="entry name" value="PdxB_dimer_sf"/>
</dbReference>
<dbReference type="NCBIfam" id="NF001309">
    <property type="entry name" value="PRK00257.1"/>
    <property type="match status" value="1"/>
</dbReference>
<dbReference type="NCBIfam" id="NF011966">
    <property type="entry name" value="PRK15438.1"/>
    <property type="match status" value="1"/>
</dbReference>
<dbReference type="PANTHER" id="PTHR42938">
    <property type="entry name" value="FORMATE DEHYDROGENASE 1"/>
    <property type="match status" value="1"/>
</dbReference>
<dbReference type="PANTHER" id="PTHR42938:SF9">
    <property type="entry name" value="FORMATE DEHYDROGENASE 1"/>
    <property type="match status" value="1"/>
</dbReference>
<dbReference type="Pfam" id="PF00389">
    <property type="entry name" value="2-Hacid_dh"/>
    <property type="match status" value="1"/>
</dbReference>
<dbReference type="Pfam" id="PF02826">
    <property type="entry name" value="2-Hacid_dh_C"/>
    <property type="match status" value="1"/>
</dbReference>
<dbReference type="Pfam" id="PF11890">
    <property type="entry name" value="DUF3410"/>
    <property type="match status" value="1"/>
</dbReference>
<dbReference type="SUPFAM" id="SSF52283">
    <property type="entry name" value="Formate/glycerate dehydrogenase catalytic domain-like"/>
    <property type="match status" value="1"/>
</dbReference>
<dbReference type="SUPFAM" id="SSF51735">
    <property type="entry name" value="NAD(P)-binding Rossmann-fold domains"/>
    <property type="match status" value="1"/>
</dbReference>
<dbReference type="PROSITE" id="PS00065">
    <property type="entry name" value="D_2_HYDROXYACID_DH_1"/>
    <property type="match status" value="1"/>
</dbReference>
<dbReference type="PROSITE" id="PS00671">
    <property type="entry name" value="D_2_HYDROXYACID_DH_3"/>
    <property type="match status" value="1"/>
</dbReference>
<organism>
    <name type="scientific">Shigella sonnei (strain Ss046)</name>
    <dbReference type="NCBI Taxonomy" id="300269"/>
    <lineage>
        <taxon>Bacteria</taxon>
        <taxon>Pseudomonadati</taxon>
        <taxon>Pseudomonadota</taxon>
        <taxon>Gammaproteobacteria</taxon>
        <taxon>Enterobacterales</taxon>
        <taxon>Enterobacteriaceae</taxon>
        <taxon>Shigella</taxon>
    </lineage>
</organism>
<keyword id="KW-0963">Cytoplasm</keyword>
<keyword id="KW-0520">NAD</keyword>
<keyword id="KW-0560">Oxidoreductase</keyword>
<keyword id="KW-0664">Pyridoxine biosynthesis</keyword>
<keyword id="KW-1185">Reference proteome</keyword>
<gene>
    <name evidence="1" type="primary">pdxB</name>
    <name type="ordered locus">SSON_2378</name>
</gene>
<proteinExistence type="inferred from homology"/>
<accession>Q3YZP1</accession>
<sequence>MKILVDENMPYARDLFSRLGEVTAVPGRPIPVAQLADADALMVRSVTKVNESLLAGKPIKFVGTATAGTDHVDEAWLKQAGIGFSAAPGCNAIAVVEYVFSSLLMLAERDGFSLHDRTVGIVGVGNVGRRLQARLEALGIKTLLCDPPRADRGDEGDFRSLDELVQHADILTFHTPLFKDGPYKTLHLADEKLIRSLKPGAILINACRGAVVDNTALLTCLNEGQKLSVVLDVWEGEPELNVELLTKVDIGTPHIAGYTLEGKARGTTQVFEAYSKFIGHEQHVALDTLLPAPEFGRITLHGPLDQPTLKRLVHLVYDVRRDDAPLRKVAGIPGEFDKLRKNYLERREWSSLYVICDDASAASLLCKLGFNAVHHPAR</sequence>
<protein>
    <recommendedName>
        <fullName evidence="1">Erythronate-4-phosphate dehydrogenase</fullName>
        <ecNumber evidence="1">1.1.1.290</ecNumber>
    </recommendedName>
</protein>